<accession>B9MS19</accession>
<reference key="1">
    <citation type="submission" date="2009-01" db="EMBL/GenBank/DDBJ databases">
        <title>Complete sequence of chromosome of Caldicellulosiruptor becscii DSM 6725.</title>
        <authorList>
            <person name="Lucas S."/>
            <person name="Copeland A."/>
            <person name="Lapidus A."/>
            <person name="Glavina del Rio T."/>
            <person name="Tice H."/>
            <person name="Bruce D."/>
            <person name="Goodwin L."/>
            <person name="Pitluck S."/>
            <person name="Sims D."/>
            <person name="Meincke L."/>
            <person name="Brettin T."/>
            <person name="Detter J.C."/>
            <person name="Han C."/>
            <person name="Larimer F."/>
            <person name="Land M."/>
            <person name="Hauser L."/>
            <person name="Kyrpides N."/>
            <person name="Ovchinnikova G."/>
            <person name="Kataeva I."/>
            <person name="Adams M.W.W."/>
        </authorList>
    </citation>
    <scope>NUCLEOTIDE SEQUENCE [LARGE SCALE GENOMIC DNA]</scope>
    <source>
        <strain>ATCC BAA-1888 / DSM 6725 / KCTC 15123 / Z-1320</strain>
    </source>
</reference>
<organism>
    <name type="scientific">Caldicellulosiruptor bescii (strain ATCC BAA-1888 / DSM 6725 / KCTC 15123 / Z-1320)</name>
    <name type="common">Anaerocellum thermophilum</name>
    <dbReference type="NCBI Taxonomy" id="521460"/>
    <lineage>
        <taxon>Bacteria</taxon>
        <taxon>Bacillati</taxon>
        <taxon>Bacillota</taxon>
        <taxon>Bacillota incertae sedis</taxon>
        <taxon>Caldicellulosiruptorales</taxon>
        <taxon>Caldicellulosiruptoraceae</taxon>
        <taxon>Caldicellulosiruptor</taxon>
    </lineage>
</organism>
<dbReference type="EC" id="2.4.2.9" evidence="1"/>
<dbReference type="EMBL" id="CP001393">
    <property type="protein sequence ID" value="ACM60473.1"/>
    <property type="molecule type" value="Genomic_DNA"/>
</dbReference>
<dbReference type="RefSeq" id="WP_015907842.1">
    <property type="nucleotide sequence ID" value="NC_012034.1"/>
</dbReference>
<dbReference type="SMR" id="B9MS19"/>
<dbReference type="STRING" id="521460.Athe_1373"/>
<dbReference type="GeneID" id="31772720"/>
<dbReference type="KEGG" id="ate:Athe_1373"/>
<dbReference type="eggNOG" id="COG2065">
    <property type="taxonomic scope" value="Bacteria"/>
</dbReference>
<dbReference type="HOGENOM" id="CLU_094234_2_1_9"/>
<dbReference type="Proteomes" id="UP000007723">
    <property type="component" value="Chromosome"/>
</dbReference>
<dbReference type="GO" id="GO:0003723">
    <property type="term" value="F:RNA binding"/>
    <property type="evidence" value="ECO:0007669"/>
    <property type="project" value="UniProtKB-UniRule"/>
</dbReference>
<dbReference type="GO" id="GO:0004845">
    <property type="term" value="F:uracil phosphoribosyltransferase activity"/>
    <property type="evidence" value="ECO:0007669"/>
    <property type="project" value="UniProtKB-UniRule"/>
</dbReference>
<dbReference type="GO" id="GO:0006353">
    <property type="term" value="P:DNA-templated transcription termination"/>
    <property type="evidence" value="ECO:0007669"/>
    <property type="project" value="UniProtKB-UniRule"/>
</dbReference>
<dbReference type="CDD" id="cd06223">
    <property type="entry name" value="PRTases_typeI"/>
    <property type="match status" value="1"/>
</dbReference>
<dbReference type="FunFam" id="3.40.50.2020:FF:000020">
    <property type="entry name" value="Bifunctional protein PyrR"/>
    <property type="match status" value="1"/>
</dbReference>
<dbReference type="Gene3D" id="3.40.50.2020">
    <property type="match status" value="1"/>
</dbReference>
<dbReference type="HAMAP" id="MF_01219">
    <property type="entry name" value="PyrR"/>
    <property type="match status" value="1"/>
</dbReference>
<dbReference type="InterPro" id="IPR000836">
    <property type="entry name" value="PRibTrfase_dom"/>
</dbReference>
<dbReference type="InterPro" id="IPR029057">
    <property type="entry name" value="PRTase-like"/>
</dbReference>
<dbReference type="InterPro" id="IPR023050">
    <property type="entry name" value="PyrR"/>
</dbReference>
<dbReference type="InterPro" id="IPR050137">
    <property type="entry name" value="PyrR_bifunctional"/>
</dbReference>
<dbReference type="NCBIfam" id="NF003545">
    <property type="entry name" value="PRK05205.1-1"/>
    <property type="match status" value="1"/>
</dbReference>
<dbReference type="NCBIfam" id="NF003548">
    <property type="entry name" value="PRK05205.1-4"/>
    <property type="match status" value="1"/>
</dbReference>
<dbReference type="NCBIfam" id="NF003549">
    <property type="entry name" value="PRK05205.1-5"/>
    <property type="match status" value="1"/>
</dbReference>
<dbReference type="PANTHER" id="PTHR11608">
    <property type="entry name" value="BIFUNCTIONAL PROTEIN PYRR"/>
    <property type="match status" value="1"/>
</dbReference>
<dbReference type="PANTHER" id="PTHR11608:SF0">
    <property type="entry name" value="BIFUNCTIONAL PROTEIN PYRR"/>
    <property type="match status" value="1"/>
</dbReference>
<dbReference type="Pfam" id="PF00156">
    <property type="entry name" value="Pribosyltran"/>
    <property type="match status" value="1"/>
</dbReference>
<dbReference type="SUPFAM" id="SSF53271">
    <property type="entry name" value="PRTase-like"/>
    <property type="match status" value="1"/>
</dbReference>
<protein>
    <recommendedName>
        <fullName evidence="1">Bifunctional protein PyrR</fullName>
    </recommendedName>
    <domain>
        <recommendedName>
            <fullName evidence="1">Pyrimidine operon regulatory protein</fullName>
        </recommendedName>
    </domain>
    <domain>
        <recommendedName>
            <fullName evidence="1">Uracil phosphoribosyltransferase</fullName>
            <shortName evidence="1">UPRTase</shortName>
            <ecNumber evidence="1">2.4.2.9</ecNumber>
        </recommendedName>
    </domain>
</protein>
<proteinExistence type="inferred from homology"/>
<sequence>MEKFKEIMDANQMRRALVRISHEILEKNKGVENLCLVGIQRRGVNLAKRIQENIEKIEGVKLPLGILDITFYRDDLSLLSEHPTVNSTRIDFDINNKKIVLVDDVLFTGRTVRAAIEALMDMGRPKMIQLAVLIDRGHRELPIRADYVGKNVPTSRKEIVHVLVDEFDNDNRVIIEQLDREI</sequence>
<name>PYRR_CALBD</name>
<gene>
    <name evidence="1" type="primary">pyrR</name>
    <name type="ordered locus">Athe_1373</name>
</gene>
<evidence type="ECO:0000255" key="1">
    <source>
        <dbReference type="HAMAP-Rule" id="MF_01219"/>
    </source>
</evidence>
<keyword id="KW-0328">Glycosyltransferase</keyword>
<keyword id="KW-0694">RNA-binding</keyword>
<keyword id="KW-0804">Transcription</keyword>
<keyword id="KW-0805">Transcription regulation</keyword>
<keyword id="KW-0806">Transcription termination</keyword>
<keyword id="KW-0808">Transferase</keyword>
<comment type="function">
    <text evidence="1">Regulates transcriptional attenuation of the pyrimidine nucleotide (pyr) operon by binding in a uridine-dependent manner to specific sites on pyr mRNA. This disrupts an antiterminator hairpin in the RNA and favors formation of a downstream transcription terminator, leading to a reduced expression of downstream genes.</text>
</comment>
<comment type="function">
    <text evidence="1">Also displays a weak uracil phosphoribosyltransferase activity which is not physiologically significant.</text>
</comment>
<comment type="catalytic activity">
    <reaction evidence="1">
        <text>UMP + diphosphate = 5-phospho-alpha-D-ribose 1-diphosphate + uracil</text>
        <dbReference type="Rhea" id="RHEA:13017"/>
        <dbReference type="ChEBI" id="CHEBI:17568"/>
        <dbReference type="ChEBI" id="CHEBI:33019"/>
        <dbReference type="ChEBI" id="CHEBI:57865"/>
        <dbReference type="ChEBI" id="CHEBI:58017"/>
        <dbReference type="EC" id="2.4.2.9"/>
    </reaction>
</comment>
<comment type="subunit">
    <text evidence="1">Homodimer and homohexamer; in equilibrium.</text>
</comment>
<comment type="similarity">
    <text evidence="1">Belongs to the purine/pyrimidine phosphoribosyltransferase family. PyrR subfamily.</text>
</comment>
<feature type="chain" id="PRO_1000164840" description="Bifunctional protein PyrR">
    <location>
        <begin position="1"/>
        <end position="182"/>
    </location>
</feature>
<feature type="short sequence motif" description="PRPP-binding" evidence="1">
    <location>
        <begin position="99"/>
        <end position="111"/>
    </location>
</feature>